<feature type="chain" id="PRO_0000298601" description="Uncharacterized HTH-type transcriptional regulator SACOL2360">
    <location>
        <begin position="1"/>
        <end position="147"/>
    </location>
</feature>
<feature type="domain" description="HTH LytTR-type" evidence="1">
    <location>
        <begin position="44"/>
        <end position="147"/>
    </location>
</feature>
<evidence type="ECO:0000255" key="1">
    <source>
        <dbReference type="PROSITE-ProRule" id="PRU00112"/>
    </source>
</evidence>
<evidence type="ECO:0000269" key="2">
    <source>
    </source>
</evidence>
<evidence type="ECO:0000305" key="3"/>
<gene>
    <name type="ordered locus">SACOL2360</name>
</gene>
<proteinExistence type="evidence at transcript level"/>
<protein>
    <recommendedName>
        <fullName>Uncharacterized HTH-type transcriptional regulator SACOL2360</fullName>
    </recommendedName>
</protein>
<organism>
    <name type="scientific">Staphylococcus aureus (strain COL)</name>
    <dbReference type="NCBI Taxonomy" id="93062"/>
    <lineage>
        <taxon>Bacteria</taxon>
        <taxon>Bacillati</taxon>
        <taxon>Bacillota</taxon>
        <taxon>Bacilli</taxon>
        <taxon>Bacillales</taxon>
        <taxon>Staphylococcaceae</taxon>
        <taxon>Staphylococcus</taxon>
    </lineage>
</organism>
<keyword id="KW-0963">Cytoplasm</keyword>
<keyword id="KW-0238">DNA-binding</keyword>
<keyword id="KW-0804">Transcription</keyword>
<keyword id="KW-0805">Transcription regulation</keyword>
<accession>Q5HDJ2</accession>
<comment type="subcellular location">
    <subcellularLocation>
        <location evidence="3">Cytoplasm</location>
    </subcellularLocation>
</comment>
<comment type="induction">
    <text evidence="2">Up-regulated during anaerobic growth.</text>
</comment>
<reference key="1">
    <citation type="journal article" date="2005" name="J. Bacteriol.">
        <title>Insights on evolution of virulence and resistance from the complete genome analysis of an early methicillin-resistant Staphylococcus aureus strain and a biofilm-producing methicillin-resistant Staphylococcus epidermidis strain.</title>
        <authorList>
            <person name="Gill S.R."/>
            <person name="Fouts D.E."/>
            <person name="Archer G.L."/>
            <person name="Mongodin E.F."/>
            <person name="DeBoy R.T."/>
            <person name="Ravel J."/>
            <person name="Paulsen I.T."/>
            <person name="Kolonay J.F."/>
            <person name="Brinkac L.M."/>
            <person name="Beanan M.J."/>
            <person name="Dodson R.J."/>
            <person name="Daugherty S.C."/>
            <person name="Madupu R."/>
            <person name="Angiuoli S.V."/>
            <person name="Durkin A.S."/>
            <person name="Haft D.H."/>
            <person name="Vamathevan J.J."/>
            <person name="Khouri H."/>
            <person name="Utterback T.R."/>
            <person name="Lee C."/>
            <person name="Dimitrov G."/>
            <person name="Jiang L."/>
            <person name="Qin H."/>
            <person name="Weidman J."/>
            <person name="Tran K."/>
            <person name="Kang K.H."/>
            <person name="Hance I.R."/>
            <person name="Nelson K.E."/>
            <person name="Fraser C.M."/>
        </authorList>
    </citation>
    <scope>NUCLEOTIDE SEQUENCE [LARGE SCALE GENOMIC DNA]</scope>
    <source>
        <strain>COL</strain>
    </source>
</reference>
<reference key="2">
    <citation type="journal article" date="2007" name="J. Bacteriol.">
        <title>Anaerobic gene expression in Staphylococcus aureus.</title>
        <authorList>
            <person name="Fuchs S."/>
            <person name="Pane-Farre J."/>
            <person name="Kohler C."/>
            <person name="Hecker M."/>
            <person name="Engelmann S."/>
        </authorList>
    </citation>
    <scope>INDUCTION DURING ANAEROBIC GROWTH</scope>
</reference>
<name>Y2360_STAAC</name>
<sequence>MMKLNLFINANETESYIDIHAPKMNDNVQSIINAVNDLDKSHTLVGYIDKEIHIINVSDVITFQVINKNVTAITSNQKFKLKLRLYELEKQLPQHFIRISKSEIVNKYYIEKLLLEPNGLIRMYLKDAHYTYSSRRYLKSIKERLSI</sequence>
<dbReference type="EMBL" id="CP000046">
    <property type="protein sequence ID" value="AAW37187.1"/>
    <property type="molecule type" value="Genomic_DNA"/>
</dbReference>
<dbReference type="RefSeq" id="WP_000977037.1">
    <property type="nucleotide sequence ID" value="NZ_JBGOFO010000004.1"/>
</dbReference>
<dbReference type="SMR" id="Q5HDJ2"/>
<dbReference type="KEGG" id="sac:SACOL2360"/>
<dbReference type="HOGENOM" id="CLU_106729_4_0_9"/>
<dbReference type="Proteomes" id="UP000000530">
    <property type="component" value="Chromosome"/>
</dbReference>
<dbReference type="GO" id="GO:0005737">
    <property type="term" value="C:cytoplasm"/>
    <property type="evidence" value="ECO:0007669"/>
    <property type="project" value="UniProtKB-SubCell"/>
</dbReference>
<dbReference type="GO" id="GO:0003677">
    <property type="term" value="F:DNA binding"/>
    <property type="evidence" value="ECO:0007669"/>
    <property type="project" value="UniProtKB-KW"/>
</dbReference>
<dbReference type="GO" id="GO:0000156">
    <property type="term" value="F:phosphorelay response regulator activity"/>
    <property type="evidence" value="ECO:0007669"/>
    <property type="project" value="InterPro"/>
</dbReference>
<dbReference type="Gene3D" id="2.40.50.1020">
    <property type="entry name" value="LytTr DNA-binding domain"/>
    <property type="match status" value="1"/>
</dbReference>
<dbReference type="InterPro" id="IPR046947">
    <property type="entry name" value="LytR-like"/>
</dbReference>
<dbReference type="InterPro" id="IPR007492">
    <property type="entry name" value="LytTR_DNA-bd_dom"/>
</dbReference>
<dbReference type="PANTHER" id="PTHR37299:SF2">
    <property type="entry name" value="HTH LYTTR-TYPE DOMAIN-CONTAINING PROTEIN"/>
    <property type="match status" value="1"/>
</dbReference>
<dbReference type="PANTHER" id="PTHR37299">
    <property type="entry name" value="TRANSCRIPTIONAL REGULATOR-RELATED"/>
    <property type="match status" value="1"/>
</dbReference>
<dbReference type="Pfam" id="PF04397">
    <property type="entry name" value="LytTR"/>
    <property type="match status" value="1"/>
</dbReference>
<dbReference type="SMART" id="SM00850">
    <property type="entry name" value="LytTR"/>
    <property type="match status" value="1"/>
</dbReference>
<dbReference type="PROSITE" id="PS50930">
    <property type="entry name" value="HTH_LYTTR"/>
    <property type="match status" value="1"/>
</dbReference>